<sequence>MQPIDELIERLKKGDRRAVAKLITLVENDESKAKVIIKKIYPLTGNAHIVGITGPPGAGKSTLLDKLIKEARREGLIVGVIAVDPTSPFTGGALLGDRIRMQRHSTDPGVFIRSMATRGSLGGLSKATNDAIKILDAYGCDVIFVETVGVGQIEVDIVKTADTVVLVTIPGLGDDVQTIKAGLMEIADIFVVNKADREGADITYFELTLALDLEKEKWEKIGWKPPIIETVGTTGKGVKELWEKIKEHKKFLEESGKLAEKRRTRIEEEVKTIIAGIVAKKVEASLSEFEDIISMVLNKDLDPYSAADLVLEKIVGR</sequence>
<protein>
    <recommendedName>
        <fullName>Putative GTPase PH0274</fullName>
        <ecNumber>3.6.-.-</ecNumber>
    </recommendedName>
</protein>
<reference key="1">
    <citation type="journal article" date="1998" name="DNA Res.">
        <title>Complete sequence and gene organization of the genome of a hyper-thermophilic archaebacterium, Pyrococcus horikoshii OT3.</title>
        <authorList>
            <person name="Kawarabayasi Y."/>
            <person name="Sawada M."/>
            <person name="Horikawa H."/>
            <person name="Haikawa Y."/>
            <person name="Hino Y."/>
            <person name="Yamamoto S."/>
            <person name="Sekine M."/>
            <person name="Baba S."/>
            <person name="Kosugi H."/>
            <person name="Hosoyama A."/>
            <person name="Nagai Y."/>
            <person name="Sakai M."/>
            <person name="Ogura K."/>
            <person name="Otsuka R."/>
            <person name="Nakazawa H."/>
            <person name="Takamiya M."/>
            <person name="Ohfuku Y."/>
            <person name="Funahashi T."/>
            <person name="Tanaka T."/>
            <person name="Kudoh Y."/>
            <person name="Yamazaki J."/>
            <person name="Kushida N."/>
            <person name="Oguchi A."/>
            <person name="Aoki K."/>
            <person name="Yoshizawa T."/>
            <person name="Nakamura Y."/>
            <person name="Robb F.T."/>
            <person name="Horikoshi K."/>
            <person name="Masuchi Y."/>
            <person name="Shizuya H."/>
            <person name="Kikuchi H."/>
        </authorList>
    </citation>
    <scope>NUCLEOTIDE SEQUENCE [LARGE SCALE GENOMIC DNA]</scope>
    <source>
        <strain>ATCC 700860 / DSM 12428 / JCM 9974 / NBRC 100139 / OT-3</strain>
    </source>
</reference>
<comment type="function">
    <text evidence="1">May have GTPase activity. May also bind and hydrolyze ATP. May function as chaperone (By similarity).</text>
</comment>
<comment type="similarity">
    <text evidence="2">Belongs to the SIMIBI class G3E GTPase family. ArgK/MeaB subfamily.</text>
</comment>
<feature type="chain" id="PRO_0000157824" description="Putative GTPase PH0274">
    <location>
        <begin position="1"/>
        <end position="317"/>
    </location>
</feature>
<feature type="binding site" evidence="1">
    <location>
        <begin position="54"/>
        <end position="62"/>
    </location>
    <ligand>
        <name>GTP</name>
        <dbReference type="ChEBI" id="CHEBI:37565"/>
    </ligand>
</feature>
<feature type="binding site" evidence="1">
    <location>
        <position position="196"/>
    </location>
    <ligand>
        <name>GTP</name>
        <dbReference type="ChEBI" id="CHEBI:37565"/>
    </ligand>
</feature>
<feature type="binding site" evidence="1">
    <location>
        <begin position="231"/>
        <end position="233"/>
    </location>
    <ligand>
        <name>GTP</name>
        <dbReference type="ChEBI" id="CHEBI:37565"/>
    </ligand>
</feature>
<proteinExistence type="inferred from homology"/>
<organism>
    <name type="scientific">Pyrococcus horikoshii (strain ATCC 700860 / DSM 12428 / JCM 9974 / NBRC 100139 / OT-3)</name>
    <dbReference type="NCBI Taxonomy" id="70601"/>
    <lineage>
        <taxon>Archaea</taxon>
        <taxon>Methanobacteriati</taxon>
        <taxon>Methanobacteriota</taxon>
        <taxon>Thermococci</taxon>
        <taxon>Thermococcales</taxon>
        <taxon>Thermococcaceae</taxon>
        <taxon>Pyrococcus</taxon>
    </lineage>
</organism>
<dbReference type="EC" id="3.6.-.-"/>
<dbReference type="EMBL" id="BA000001">
    <property type="protein sequence ID" value="BAA29346.1"/>
    <property type="molecule type" value="Genomic_DNA"/>
</dbReference>
<dbReference type="PIR" id="C71452">
    <property type="entry name" value="C71452"/>
</dbReference>
<dbReference type="RefSeq" id="WP_010884371.1">
    <property type="nucleotide sequence ID" value="NC_000961.1"/>
</dbReference>
<dbReference type="SMR" id="O58012"/>
<dbReference type="STRING" id="70601.gene:9377190"/>
<dbReference type="EnsemblBacteria" id="BAA29346">
    <property type="protein sequence ID" value="BAA29346"/>
    <property type="gene ID" value="BAA29346"/>
</dbReference>
<dbReference type="GeneID" id="1444158"/>
<dbReference type="KEGG" id="pho:PH0274"/>
<dbReference type="eggNOG" id="arCOG01226">
    <property type="taxonomic scope" value="Archaea"/>
</dbReference>
<dbReference type="OrthoDB" id="21324at2157"/>
<dbReference type="Proteomes" id="UP000000752">
    <property type="component" value="Chromosome"/>
</dbReference>
<dbReference type="GO" id="GO:0005524">
    <property type="term" value="F:ATP binding"/>
    <property type="evidence" value="ECO:0007669"/>
    <property type="project" value="UniProtKB-KW"/>
</dbReference>
<dbReference type="GO" id="GO:0016887">
    <property type="term" value="F:ATP hydrolysis activity"/>
    <property type="evidence" value="ECO:0007669"/>
    <property type="project" value="InterPro"/>
</dbReference>
<dbReference type="GO" id="GO:0005525">
    <property type="term" value="F:GTP binding"/>
    <property type="evidence" value="ECO:0007669"/>
    <property type="project" value="UniProtKB-KW"/>
</dbReference>
<dbReference type="GO" id="GO:0003924">
    <property type="term" value="F:GTPase activity"/>
    <property type="evidence" value="ECO:0007669"/>
    <property type="project" value="InterPro"/>
</dbReference>
<dbReference type="CDD" id="cd03114">
    <property type="entry name" value="MMAA-like"/>
    <property type="match status" value="1"/>
</dbReference>
<dbReference type="Gene3D" id="1.20.5.170">
    <property type="match status" value="1"/>
</dbReference>
<dbReference type="Gene3D" id="3.40.50.300">
    <property type="entry name" value="P-loop containing nucleotide triphosphate hydrolases"/>
    <property type="match status" value="1"/>
</dbReference>
<dbReference type="InterPro" id="IPR003593">
    <property type="entry name" value="AAA+_ATPase"/>
</dbReference>
<dbReference type="InterPro" id="IPR052040">
    <property type="entry name" value="GTPase/Isobutyryl-CoA_mutase"/>
</dbReference>
<dbReference type="InterPro" id="IPR005129">
    <property type="entry name" value="GTPase_ArgK"/>
</dbReference>
<dbReference type="InterPro" id="IPR027417">
    <property type="entry name" value="P-loop_NTPase"/>
</dbReference>
<dbReference type="NCBIfam" id="TIGR00750">
    <property type="entry name" value="lao"/>
    <property type="match status" value="1"/>
</dbReference>
<dbReference type="PANTHER" id="PTHR43087:SF1">
    <property type="entry name" value="LAO_AO TRANSPORT SYSTEM ATPASE"/>
    <property type="match status" value="1"/>
</dbReference>
<dbReference type="PANTHER" id="PTHR43087">
    <property type="entry name" value="LYSINE/ARGININE/ORNITHINE TRANSPORT SYSTEM KINASE"/>
    <property type="match status" value="1"/>
</dbReference>
<dbReference type="Pfam" id="PF03308">
    <property type="entry name" value="MeaB"/>
    <property type="match status" value="1"/>
</dbReference>
<dbReference type="SMART" id="SM00382">
    <property type="entry name" value="AAA"/>
    <property type="match status" value="1"/>
</dbReference>
<dbReference type="SUPFAM" id="SSF52540">
    <property type="entry name" value="P-loop containing nucleoside triphosphate hydrolases"/>
    <property type="match status" value="1"/>
</dbReference>
<keyword id="KW-0067">ATP-binding</keyword>
<keyword id="KW-0143">Chaperone</keyword>
<keyword id="KW-0342">GTP-binding</keyword>
<keyword id="KW-0378">Hydrolase</keyword>
<keyword id="KW-0547">Nucleotide-binding</keyword>
<gene>
    <name type="ordered locus">PH0274</name>
    <name type="ORF">PHBM032</name>
</gene>
<accession>O58012</accession>
<evidence type="ECO:0000250" key="1"/>
<evidence type="ECO:0000305" key="2"/>
<name>Y274_PYRHO</name>